<protein>
    <recommendedName>
        <fullName>Meiotically up-regulated gene 124 protein</fullName>
    </recommendedName>
</protein>
<accession>Q9UUD4</accession>
<dbReference type="EMBL" id="CU329671">
    <property type="protein sequence ID" value="CAB52033.1"/>
    <property type="molecule type" value="Genomic_DNA"/>
</dbReference>
<dbReference type="PIR" id="T39797">
    <property type="entry name" value="T39797"/>
</dbReference>
<dbReference type="RefSeq" id="NP_595691.1">
    <property type="nucleotide sequence ID" value="NM_001021588.2"/>
</dbReference>
<dbReference type="BioGRID" id="277308">
    <property type="interactions" value="6"/>
</dbReference>
<dbReference type="PaxDb" id="4896-SPBC19C2.06c.1"/>
<dbReference type="EnsemblFungi" id="SPBC19C2.06c.1">
    <property type="protein sequence ID" value="SPBC19C2.06c.1:pep"/>
    <property type="gene ID" value="SPBC19C2.06c"/>
</dbReference>
<dbReference type="GeneID" id="2540789"/>
<dbReference type="KEGG" id="spo:2540789"/>
<dbReference type="PomBase" id="SPBC19C2.06c">
    <property type="gene designation" value="mug124"/>
</dbReference>
<dbReference type="VEuPathDB" id="FungiDB:SPBC19C2.06c"/>
<dbReference type="HOGENOM" id="CLU_1787943_0_0_1"/>
<dbReference type="InParanoid" id="Q9UUD4"/>
<dbReference type="PRO" id="PR:Q9UUD4"/>
<dbReference type="Proteomes" id="UP000002485">
    <property type="component" value="Chromosome II"/>
</dbReference>
<dbReference type="GO" id="GO:0016020">
    <property type="term" value="C:membrane"/>
    <property type="evidence" value="ECO:0007669"/>
    <property type="project" value="UniProtKB-SubCell"/>
</dbReference>
<dbReference type="GO" id="GO:0051321">
    <property type="term" value="P:meiotic cell cycle"/>
    <property type="evidence" value="ECO:0007669"/>
    <property type="project" value="UniProtKB-KW"/>
</dbReference>
<sequence>MRLQSLSSVAIAETRRQIILTIINSLVYLVNFISCPSIHSIPFHISTHLTSCQANISLLKIVGLHCPFHRRGIASLSVCVALHWIAFSCSVMCHFAWSCALPCFVDSFFPSNFFLRTYALFTFSLQLWSGNDLQGNHSYLATPTR</sequence>
<reference key="1">
    <citation type="journal article" date="2002" name="Nature">
        <title>The genome sequence of Schizosaccharomyces pombe.</title>
        <authorList>
            <person name="Wood V."/>
            <person name="Gwilliam R."/>
            <person name="Rajandream M.A."/>
            <person name="Lyne M.H."/>
            <person name="Lyne R."/>
            <person name="Stewart A."/>
            <person name="Sgouros J.G."/>
            <person name="Peat N."/>
            <person name="Hayles J."/>
            <person name="Baker S.G."/>
            <person name="Basham D."/>
            <person name="Bowman S."/>
            <person name="Brooks K."/>
            <person name="Brown D."/>
            <person name="Brown S."/>
            <person name="Chillingworth T."/>
            <person name="Churcher C.M."/>
            <person name="Collins M."/>
            <person name="Connor R."/>
            <person name="Cronin A."/>
            <person name="Davis P."/>
            <person name="Feltwell T."/>
            <person name="Fraser A."/>
            <person name="Gentles S."/>
            <person name="Goble A."/>
            <person name="Hamlin N."/>
            <person name="Harris D.E."/>
            <person name="Hidalgo J."/>
            <person name="Hodgson G."/>
            <person name="Holroyd S."/>
            <person name="Hornsby T."/>
            <person name="Howarth S."/>
            <person name="Huckle E.J."/>
            <person name="Hunt S."/>
            <person name="Jagels K."/>
            <person name="James K.D."/>
            <person name="Jones L."/>
            <person name="Jones M."/>
            <person name="Leather S."/>
            <person name="McDonald S."/>
            <person name="McLean J."/>
            <person name="Mooney P."/>
            <person name="Moule S."/>
            <person name="Mungall K.L."/>
            <person name="Murphy L.D."/>
            <person name="Niblett D."/>
            <person name="Odell C."/>
            <person name="Oliver K."/>
            <person name="O'Neil S."/>
            <person name="Pearson D."/>
            <person name="Quail M.A."/>
            <person name="Rabbinowitsch E."/>
            <person name="Rutherford K.M."/>
            <person name="Rutter S."/>
            <person name="Saunders D."/>
            <person name="Seeger K."/>
            <person name="Sharp S."/>
            <person name="Skelton J."/>
            <person name="Simmonds M.N."/>
            <person name="Squares R."/>
            <person name="Squares S."/>
            <person name="Stevens K."/>
            <person name="Taylor K."/>
            <person name="Taylor R.G."/>
            <person name="Tivey A."/>
            <person name="Walsh S.V."/>
            <person name="Warren T."/>
            <person name="Whitehead S."/>
            <person name="Woodward J.R."/>
            <person name="Volckaert G."/>
            <person name="Aert R."/>
            <person name="Robben J."/>
            <person name="Grymonprez B."/>
            <person name="Weltjens I."/>
            <person name="Vanstreels E."/>
            <person name="Rieger M."/>
            <person name="Schaefer M."/>
            <person name="Mueller-Auer S."/>
            <person name="Gabel C."/>
            <person name="Fuchs M."/>
            <person name="Duesterhoeft A."/>
            <person name="Fritzc C."/>
            <person name="Holzer E."/>
            <person name="Moestl D."/>
            <person name="Hilbert H."/>
            <person name="Borzym K."/>
            <person name="Langer I."/>
            <person name="Beck A."/>
            <person name="Lehrach H."/>
            <person name="Reinhardt R."/>
            <person name="Pohl T.M."/>
            <person name="Eger P."/>
            <person name="Zimmermann W."/>
            <person name="Wedler H."/>
            <person name="Wambutt R."/>
            <person name="Purnelle B."/>
            <person name="Goffeau A."/>
            <person name="Cadieu E."/>
            <person name="Dreano S."/>
            <person name="Gloux S."/>
            <person name="Lelaure V."/>
            <person name="Mottier S."/>
            <person name="Galibert F."/>
            <person name="Aves S.J."/>
            <person name="Xiang Z."/>
            <person name="Hunt C."/>
            <person name="Moore K."/>
            <person name="Hurst S.M."/>
            <person name="Lucas M."/>
            <person name="Rochet M."/>
            <person name="Gaillardin C."/>
            <person name="Tallada V.A."/>
            <person name="Garzon A."/>
            <person name="Thode G."/>
            <person name="Daga R.R."/>
            <person name="Cruzado L."/>
            <person name="Jimenez J."/>
            <person name="Sanchez M."/>
            <person name="del Rey F."/>
            <person name="Benito J."/>
            <person name="Dominguez A."/>
            <person name="Revuelta J.L."/>
            <person name="Moreno S."/>
            <person name="Armstrong J."/>
            <person name="Forsburg S.L."/>
            <person name="Cerutti L."/>
            <person name="Lowe T."/>
            <person name="McCombie W.R."/>
            <person name="Paulsen I."/>
            <person name="Potashkin J."/>
            <person name="Shpakovski G.V."/>
            <person name="Ussery D."/>
            <person name="Barrell B.G."/>
            <person name="Nurse P."/>
        </authorList>
    </citation>
    <scope>NUCLEOTIDE SEQUENCE [LARGE SCALE GENOMIC DNA]</scope>
    <source>
        <strain>972 / ATCC 24843</strain>
    </source>
</reference>
<reference key="2">
    <citation type="journal article" date="2005" name="Curr. Biol.">
        <title>A large-scale screen in S. pombe identifies seven novel genes required for critical meiotic events.</title>
        <authorList>
            <person name="Martin-Castellanos C."/>
            <person name="Blanco M."/>
            <person name="Rozalen A.E."/>
            <person name="Perez-Hidalgo L."/>
            <person name="Garcia A.I."/>
            <person name="Conde F."/>
            <person name="Mata J."/>
            <person name="Ellermeier C."/>
            <person name="Davis L."/>
            <person name="San-Segundo P."/>
            <person name="Smith G.R."/>
            <person name="Moreno S."/>
        </authorList>
    </citation>
    <scope>FUNCTION IN MEIOSIS</scope>
</reference>
<evidence type="ECO:0000255" key="1"/>
<evidence type="ECO:0000269" key="2">
    <source>
    </source>
</evidence>
<evidence type="ECO:0000305" key="3"/>
<keyword id="KW-0469">Meiosis</keyword>
<keyword id="KW-0472">Membrane</keyword>
<keyword id="KW-1185">Reference proteome</keyword>
<keyword id="KW-0812">Transmembrane</keyword>
<keyword id="KW-1133">Transmembrane helix</keyword>
<gene>
    <name type="primary">mug124</name>
    <name type="ORF">SPBC19C2.06c</name>
</gene>
<name>MU124_SCHPO</name>
<comment type="function">
    <text evidence="2">Has a role in meiosis.</text>
</comment>
<comment type="subcellular location">
    <subcellularLocation>
        <location evidence="3">Membrane</location>
        <topology evidence="3">Multi-pass membrane protein</topology>
    </subcellularLocation>
</comment>
<organism>
    <name type="scientific">Schizosaccharomyces pombe (strain 972 / ATCC 24843)</name>
    <name type="common">Fission yeast</name>
    <dbReference type="NCBI Taxonomy" id="284812"/>
    <lineage>
        <taxon>Eukaryota</taxon>
        <taxon>Fungi</taxon>
        <taxon>Dikarya</taxon>
        <taxon>Ascomycota</taxon>
        <taxon>Taphrinomycotina</taxon>
        <taxon>Schizosaccharomycetes</taxon>
        <taxon>Schizosaccharomycetales</taxon>
        <taxon>Schizosaccharomycetaceae</taxon>
        <taxon>Schizosaccharomyces</taxon>
    </lineage>
</organism>
<feature type="chain" id="PRO_0000116857" description="Meiotically up-regulated gene 124 protein">
    <location>
        <begin position="1"/>
        <end position="145"/>
    </location>
</feature>
<feature type="transmembrane region" description="Helical" evidence="1">
    <location>
        <begin position="18"/>
        <end position="38"/>
    </location>
</feature>
<feature type="transmembrane region" description="Helical" evidence="1">
    <location>
        <begin position="95"/>
        <end position="115"/>
    </location>
</feature>
<proteinExistence type="evidence at protein level"/>